<dbReference type="EC" id="3.1.1.29" evidence="1"/>
<dbReference type="EMBL" id="AP010904">
    <property type="protein sequence ID" value="BAH76436.1"/>
    <property type="molecule type" value="Genomic_DNA"/>
</dbReference>
<dbReference type="RefSeq" id="WP_015861598.1">
    <property type="nucleotide sequence ID" value="NC_012796.1"/>
</dbReference>
<dbReference type="SMR" id="C4XHR2"/>
<dbReference type="STRING" id="573370.DMR_29450"/>
<dbReference type="KEGG" id="dma:DMR_29450"/>
<dbReference type="eggNOG" id="COG0193">
    <property type="taxonomic scope" value="Bacteria"/>
</dbReference>
<dbReference type="HOGENOM" id="CLU_062456_2_2_7"/>
<dbReference type="OrthoDB" id="9800507at2"/>
<dbReference type="Proteomes" id="UP000009071">
    <property type="component" value="Chromosome"/>
</dbReference>
<dbReference type="GO" id="GO:0005737">
    <property type="term" value="C:cytoplasm"/>
    <property type="evidence" value="ECO:0007669"/>
    <property type="project" value="UniProtKB-SubCell"/>
</dbReference>
<dbReference type="GO" id="GO:0004045">
    <property type="term" value="F:peptidyl-tRNA hydrolase activity"/>
    <property type="evidence" value="ECO:0007669"/>
    <property type="project" value="UniProtKB-UniRule"/>
</dbReference>
<dbReference type="GO" id="GO:0000049">
    <property type="term" value="F:tRNA binding"/>
    <property type="evidence" value="ECO:0007669"/>
    <property type="project" value="UniProtKB-UniRule"/>
</dbReference>
<dbReference type="GO" id="GO:0006515">
    <property type="term" value="P:protein quality control for misfolded or incompletely synthesized proteins"/>
    <property type="evidence" value="ECO:0007669"/>
    <property type="project" value="UniProtKB-UniRule"/>
</dbReference>
<dbReference type="GO" id="GO:0072344">
    <property type="term" value="P:rescue of stalled ribosome"/>
    <property type="evidence" value="ECO:0007669"/>
    <property type="project" value="UniProtKB-UniRule"/>
</dbReference>
<dbReference type="CDD" id="cd00462">
    <property type="entry name" value="PTH"/>
    <property type="match status" value="1"/>
</dbReference>
<dbReference type="FunFam" id="3.40.50.1470:FF:000001">
    <property type="entry name" value="Peptidyl-tRNA hydrolase"/>
    <property type="match status" value="1"/>
</dbReference>
<dbReference type="Gene3D" id="3.40.50.1470">
    <property type="entry name" value="Peptidyl-tRNA hydrolase"/>
    <property type="match status" value="1"/>
</dbReference>
<dbReference type="HAMAP" id="MF_00083">
    <property type="entry name" value="Pept_tRNA_hydro_bact"/>
    <property type="match status" value="1"/>
</dbReference>
<dbReference type="InterPro" id="IPR001328">
    <property type="entry name" value="Pept_tRNA_hydro"/>
</dbReference>
<dbReference type="InterPro" id="IPR018171">
    <property type="entry name" value="Pept_tRNA_hydro_CS"/>
</dbReference>
<dbReference type="InterPro" id="IPR036416">
    <property type="entry name" value="Pept_tRNA_hydro_sf"/>
</dbReference>
<dbReference type="NCBIfam" id="TIGR00447">
    <property type="entry name" value="pth"/>
    <property type="match status" value="1"/>
</dbReference>
<dbReference type="PANTHER" id="PTHR17224">
    <property type="entry name" value="PEPTIDYL-TRNA HYDROLASE"/>
    <property type="match status" value="1"/>
</dbReference>
<dbReference type="PANTHER" id="PTHR17224:SF1">
    <property type="entry name" value="PEPTIDYL-TRNA HYDROLASE"/>
    <property type="match status" value="1"/>
</dbReference>
<dbReference type="Pfam" id="PF01195">
    <property type="entry name" value="Pept_tRNA_hydro"/>
    <property type="match status" value="1"/>
</dbReference>
<dbReference type="SUPFAM" id="SSF53178">
    <property type="entry name" value="Peptidyl-tRNA hydrolase-like"/>
    <property type="match status" value="1"/>
</dbReference>
<dbReference type="PROSITE" id="PS01195">
    <property type="entry name" value="PEPT_TRNA_HYDROL_1"/>
    <property type="match status" value="1"/>
</dbReference>
<dbReference type="PROSITE" id="PS01196">
    <property type="entry name" value="PEPT_TRNA_HYDROL_2"/>
    <property type="match status" value="1"/>
</dbReference>
<protein>
    <recommendedName>
        <fullName evidence="1">Peptidyl-tRNA hydrolase</fullName>
        <shortName evidence="1">Pth</shortName>
        <ecNumber evidence="1">3.1.1.29</ecNumber>
    </recommendedName>
</protein>
<proteinExistence type="inferred from homology"/>
<feature type="chain" id="PRO_1000202579" description="Peptidyl-tRNA hydrolase">
    <location>
        <begin position="1"/>
        <end position="211"/>
    </location>
</feature>
<feature type="active site" description="Proton acceptor" evidence="1">
    <location>
        <position position="22"/>
    </location>
</feature>
<feature type="binding site" evidence="1">
    <location>
        <position position="17"/>
    </location>
    <ligand>
        <name>tRNA</name>
        <dbReference type="ChEBI" id="CHEBI:17843"/>
    </ligand>
</feature>
<feature type="binding site" evidence="1">
    <location>
        <position position="79"/>
    </location>
    <ligand>
        <name>tRNA</name>
        <dbReference type="ChEBI" id="CHEBI:17843"/>
    </ligand>
</feature>
<feature type="binding site" evidence="1">
    <location>
        <position position="81"/>
    </location>
    <ligand>
        <name>tRNA</name>
        <dbReference type="ChEBI" id="CHEBI:17843"/>
    </ligand>
</feature>
<feature type="binding site" evidence="1">
    <location>
        <position position="127"/>
    </location>
    <ligand>
        <name>tRNA</name>
        <dbReference type="ChEBI" id="CHEBI:17843"/>
    </ligand>
</feature>
<feature type="site" description="Discriminates between blocked and unblocked aminoacyl-tRNA" evidence="1">
    <location>
        <position position="12"/>
    </location>
</feature>
<feature type="site" description="Stabilizes the basic form of H active site to accept a proton" evidence="1">
    <location>
        <position position="106"/>
    </location>
</feature>
<keyword id="KW-0963">Cytoplasm</keyword>
<keyword id="KW-0378">Hydrolase</keyword>
<keyword id="KW-0694">RNA-binding</keyword>
<keyword id="KW-0820">tRNA-binding</keyword>
<evidence type="ECO:0000255" key="1">
    <source>
        <dbReference type="HAMAP-Rule" id="MF_00083"/>
    </source>
</evidence>
<gene>
    <name evidence="1" type="primary">pth</name>
    <name type="ordered locus">DMR_29450</name>
</gene>
<sequence length="211" mass="22529">MAVSAIIVGLGNPGPRYAATRHNFGFMVLDALMERARQLGGAPKATLTGRKDLEAVTLSLPVLPGGAFAQFACVKPLTFMNLSGRAVRAALDFYKLAPTDVFVLHDELDLPLGRMRLKRGGGNAGHNGLKSINQELGSPEFVRLRLGIGRPEGRDVAGYVLEAFRGDETPVVRQVVPAAVDGIMAFFEDGLETAQRRVGGFDAVPPPLPQP</sequence>
<accession>C4XHR2</accession>
<reference key="1">
    <citation type="journal article" date="2009" name="Genome Res.">
        <title>Whole genome sequence of Desulfovibrio magneticus strain RS-1 revealed common gene clusters in magnetotactic bacteria.</title>
        <authorList>
            <person name="Nakazawa H."/>
            <person name="Arakaki A."/>
            <person name="Narita-Yamada S."/>
            <person name="Yashiro I."/>
            <person name="Jinno K."/>
            <person name="Aoki N."/>
            <person name="Tsuruyama A."/>
            <person name="Okamura Y."/>
            <person name="Tanikawa S."/>
            <person name="Fujita N."/>
            <person name="Takeyama H."/>
            <person name="Matsunaga T."/>
        </authorList>
    </citation>
    <scope>NUCLEOTIDE SEQUENCE [LARGE SCALE GENOMIC DNA]</scope>
    <source>
        <strain>ATCC 700980 / DSM 13731 / RS-1</strain>
    </source>
</reference>
<comment type="function">
    <text evidence="1">Hydrolyzes ribosome-free peptidyl-tRNAs (with 1 or more amino acids incorporated), which drop off the ribosome during protein synthesis, or as a result of ribosome stalling.</text>
</comment>
<comment type="function">
    <text evidence="1">Catalyzes the release of premature peptidyl moieties from peptidyl-tRNA molecules trapped in stalled 50S ribosomal subunits, and thus maintains levels of free tRNAs and 50S ribosomes.</text>
</comment>
<comment type="catalytic activity">
    <reaction evidence="1">
        <text>an N-acyl-L-alpha-aminoacyl-tRNA + H2O = an N-acyl-L-amino acid + a tRNA + H(+)</text>
        <dbReference type="Rhea" id="RHEA:54448"/>
        <dbReference type="Rhea" id="RHEA-COMP:10123"/>
        <dbReference type="Rhea" id="RHEA-COMP:13883"/>
        <dbReference type="ChEBI" id="CHEBI:15377"/>
        <dbReference type="ChEBI" id="CHEBI:15378"/>
        <dbReference type="ChEBI" id="CHEBI:59874"/>
        <dbReference type="ChEBI" id="CHEBI:78442"/>
        <dbReference type="ChEBI" id="CHEBI:138191"/>
        <dbReference type="EC" id="3.1.1.29"/>
    </reaction>
</comment>
<comment type="subunit">
    <text evidence="1">Monomer.</text>
</comment>
<comment type="subcellular location">
    <subcellularLocation>
        <location evidence="1">Cytoplasm</location>
    </subcellularLocation>
</comment>
<comment type="similarity">
    <text evidence="1">Belongs to the PTH family.</text>
</comment>
<name>PTH_SOLM1</name>
<organism>
    <name type="scientific">Solidesulfovibrio magneticus (strain ATCC 700980 / DSM 13731 / RS-1)</name>
    <name type="common">Desulfovibrio magneticus</name>
    <dbReference type="NCBI Taxonomy" id="573370"/>
    <lineage>
        <taxon>Bacteria</taxon>
        <taxon>Pseudomonadati</taxon>
        <taxon>Thermodesulfobacteriota</taxon>
        <taxon>Desulfovibrionia</taxon>
        <taxon>Desulfovibrionales</taxon>
        <taxon>Desulfovibrionaceae</taxon>
        <taxon>Solidesulfovibrio</taxon>
    </lineage>
</organism>